<reference key="1">
    <citation type="journal article" date="2006" name="Mol. Microbiol.">
        <title>Role of pathogenicity island-associated integrases in the genome plasticity of uropathogenic Escherichia coli strain 536.</title>
        <authorList>
            <person name="Hochhut B."/>
            <person name="Wilde C."/>
            <person name="Balling G."/>
            <person name="Middendorf B."/>
            <person name="Dobrindt U."/>
            <person name="Brzuszkiewicz E."/>
            <person name="Gottschalk G."/>
            <person name="Carniel E."/>
            <person name="Hacker J."/>
        </authorList>
    </citation>
    <scope>NUCLEOTIDE SEQUENCE [LARGE SCALE GENOMIC DNA]</scope>
    <source>
        <strain>536 / UPEC</strain>
    </source>
</reference>
<sequence>MKSVRYLIGLFAFIACYYLLPISTRLLWQPDETRYAEISREMLASGDWIVPHLLGLRYFEKPIAGYWINSIGQWLFGANNFGVRAGVIFATLLTAALVTWFTLRLWRDKRLALLATVIYLSLFIVYAIGTYAVLDPFIAFWLVAGMCSFWLAMQAQTWKGKSAGFLLLGITCGMGVMTKGFLALAVPVLSVLPWVATQKRWKDLFIYGWLAVISCVLTVLPWGLAIAQREPDFWHYFFWVEHIQRFALDDAQHRAPFWYYLPVVIAGSLPWLGLLPGALYAGWKNRKHSATVYLLSWTIMPLLFFSVAKGKLPTYILSCFAPLAILMAHYALLAAKNNPLALRINGWINIAFGVTGIIATFVVSPWGPMNTPVWQTFESYKVFCAWSIFSLWAFFGWYTLTNVEKTWPFAALCPLGLALLVGFSIPDRVMEGKHPQFFVEMTQESLQPSRYILTDSVGVAAGLAWSLQRDDIIMYRQTGELKYGLNYPDAKGRFVSGDEFANWLNQHRQEGIITLVLSVDRDEDINSLAIPPADVIDRQERLVLIQYRPK</sequence>
<evidence type="ECO:0000255" key="1">
    <source>
        <dbReference type="HAMAP-Rule" id="MF_01165"/>
    </source>
</evidence>
<organism>
    <name type="scientific">Escherichia coli O6:K15:H31 (strain 536 / UPEC)</name>
    <dbReference type="NCBI Taxonomy" id="362663"/>
    <lineage>
        <taxon>Bacteria</taxon>
        <taxon>Pseudomonadati</taxon>
        <taxon>Pseudomonadota</taxon>
        <taxon>Gammaproteobacteria</taxon>
        <taxon>Enterobacterales</taxon>
        <taxon>Enterobacteriaceae</taxon>
        <taxon>Escherichia</taxon>
    </lineage>
</organism>
<comment type="function">
    <text evidence="1">Catalyzes the transfer of the L-Ara4N moiety of the glycolipid undecaprenyl phosphate-alpha-L-Ara4N to lipid A. The modified arabinose is attached to lipid A and is required for resistance to polymyxin and cationic antimicrobial peptides.</text>
</comment>
<comment type="catalytic activity">
    <reaction evidence="1">
        <text>4-amino-4-deoxy-alpha-L-arabinopyranosyl di-trans,octa-cis-undecaprenyl phosphate + lipid IVA = lipid IIA + di-trans,octa-cis-undecaprenyl phosphate.</text>
        <dbReference type="EC" id="2.4.2.43"/>
    </reaction>
</comment>
<comment type="pathway">
    <text evidence="1">Lipopolysaccharide metabolism; 4-amino-4-deoxy-beta-L-arabinose-lipid A biosynthesis.</text>
</comment>
<comment type="subcellular location">
    <subcellularLocation>
        <location evidence="1">Cell inner membrane</location>
        <topology evidence="1">Multi-pass membrane protein</topology>
    </subcellularLocation>
</comment>
<comment type="similarity">
    <text evidence="1">Belongs to the glycosyltransferase 83 family.</text>
</comment>
<gene>
    <name evidence="1" type="primary">arnT</name>
    <name type="ordered locus">ECP_2300</name>
</gene>
<name>ARNT_ECOL5</name>
<accession>Q0TFI5</accession>
<feature type="chain" id="PRO_0000380005" description="Undecaprenyl phosphate-alpha-4-amino-4-deoxy-L-arabinose arabinosyl transferase">
    <location>
        <begin position="1"/>
        <end position="550"/>
    </location>
</feature>
<feature type="transmembrane region" description="Helical" evidence="1">
    <location>
        <begin position="7"/>
        <end position="27"/>
    </location>
</feature>
<feature type="transmembrane region" description="Helical" evidence="1">
    <location>
        <begin position="81"/>
        <end position="101"/>
    </location>
</feature>
<feature type="transmembrane region" description="Helical" evidence="1">
    <location>
        <begin position="111"/>
        <end position="133"/>
    </location>
</feature>
<feature type="transmembrane region" description="Helical" evidence="1">
    <location>
        <begin position="137"/>
        <end position="154"/>
    </location>
</feature>
<feature type="transmembrane region" description="Helical" evidence="1">
    <location>
        <begin position="165"/>
        <end position="185"/>
    </location>
</feature>
<feature type="transmembrane region" description="Helical" evidence="1">
    <location>
        <begin position="204"/>
        <end position="224"/>
    </location>
</feature>
<feature type="transmembrane region" description="Helical" evidence="1">
    <location>
        <begin position="263"/>
        <end position="283"/>
    </location>
</feature>
<feature type="transmembrane region" description="Helical" evidence="1">
    <location>
        <begin position="288"/>
        <end position="308"/>
    </location>
</feature>
<feature type="transmembrane region" description="Helical" evidence="1">
    <location>
        <begin position="315"/>
        <end position="335"/>
    </location>
</feature>
<feature type="transmembrane region" description="Helical" evidence="1">
    <location>
        <begin position="346"/>
        <end position="366"/>
    </location>
</feature>
<feature type="transmembrane region" description="Helical" evidence="1">
    <location>
        <begin position="382"/>
        <end position="402"/>
    </location>
</feature>
<feature type="transmembrane region" description="Helical" evidence="1">
    <location>
        <begin position="406"/>
        <end position="426"/>
    </location>
</feature>
<dbReference type="EC" id="2.4.2.43" evidence="1"/>
<dbReference type="EMBL" id="CP000247">
    <property type="protein sequence ID" value="ABG70294.1"/>
    <property type="molecule type" value="Genomic_DNA"/>
</dbReference>
<dbReference type="RefSeq" id="WP_000844036.1">
    <property type="nucleotide sequence ID" value="NC_008253.1"/>
</dbReference>
<dbReference type="SMR" id="Q0TFI5"/>
<dbReference type="CAZy" id="GT83">
    <property type="family name" value="Glycosyltransferase Family 83"/>
</dbReference>
<dbReference type="KEGG" id="ecp:ECP_2300"/>
<dbReference type="HOGENOM" id="CLU_019200_2_1_6"/>
<dbReference type="UniPathway" id="UPA00037"/>
<dbReference type="Proteomes" id="UP000009182">
    <property type="component" value="Chromosome"/>
</dbReference>
<dbReference type="GO" id="GO:0005886">
    <property type="term" value="C:plasma membrane"/>
    <property type="evidence" value="ECO:0007669"/>
    <property type="project" value="UniProtKB-SubCell"/>
</dbReference>
<dbReference type="GO" id="GO:0103015">
    <property type="term" value="F:4-amino-4-deoxy-L-arabinose transferase activity"/>
    <property type="evidence" value="ECO:0007669"/>
    <property type="project" value="UniProtKB-EC"/>
</dbReference>
<dbReference type="GO" id="GO:0000030">
    <property type="term" value="F:mannosyltransferase activity"/>
    <property type="evidence" value="ECO:0007669"/>
    <property type="project" value="InterPro"/>
</dbReference>
<dbReference type="GO" id="GO:0009245">
    <property type="term" value="P:lipid A biosynthetic process"/>
    <property type="evidence" value="ECO:0007669"/>
    <property type="project" value="UniProtKB-UniRule"/>
</dbReference>
<dbReference type="GO" id="GO:0009103">
    <property type="term" value="P:lipopolysaccharide biosynthetic process"/>
    <property type="evidence" value="ECO:0007669"/>
    <property type="project" value="UniProtKB-KW"/>
</dbReference>
<dbReference type="GO" id="GO:0006493">
    <property type="term" value="P:protein O-linked glycosylation"/>
    <property type="evidence" value="ECO:0007669"/>
    <property type="project" value="InterPro"/>
</dbReference>
<dbReference type="GO" id="GO:0010041">
    <property type="term" value="P:response to iron(III) ion"/>
    <property type="evidence" value="ECO:0007669"/>
    <property type="project" value="TreeGrafter"/>
</dbReference>
<dbReference type="HAMAP" id="MF_01165">
    <property type="entry name" value="ArnT_transfer"/>
    <property type="match status" value="1"/>
</dbReference>
<dbReference type="InterPro" id="IPR022839">
    <property type="entry name" value="ArnT_tfrase"/>
</dbReference>
<dbReference type="InterPro" id="IPR003342">
    <property type="entry name" value="Glyco_trans_39/83"/>
</dbReference>
<dbReference type="InterPro" id="IPR050297">
    <property type="entry name" value="LipidA_mod_glycosyltrf_83"/>
</dbReference>
<dbReference type="NCBIfam" id="NF009784">
    <property type="entry name" value="PRK13279.1"/>
    <property type="match status" value="1"/>
</dbReference>
<dbReference type="PANTHER" id="PTHR33908">
    <property type="entry name" value="MANNOSYLTRANSFERASE YKCB-RELATED"/>
    <property type="match status" value="1"/>
</dbReference>
<dbReference type="PANTHER" id="PTHR33908:SF3">
    <property type="entry name" value="UNDECAPRENYL PHOSPHATE-ALPHA-4-AMINO-4-DEOXY-L-ARABINOSE ARABINOSYL TRANSFERASE"/>
    <property type="match status" value="1"/>
</dbReference>
<dbReference type="Pfam" id="PF02366">
    <property type="entry name" value="PMT"/>
    <property type="match status" value="1"/>
</dbReference>
<keyword id="KW-0997">Cell inner membrane</keyword>
<keyword id="KW-1003">Cell membrane</keyword>
<keyword id="KW-0328">Glycosyltransferase</keyword>
<keyword id="KW-0441">Lipid A biosynthesis</keyword>
<keyword id="KW-0444">Lipid biosynthesis</keyword>
<keyword id="KW-0443">Lipid metabolism</keyword>
<keyword id="KW-0448">Lipopolysaccharide biosynthesis</keyword>
<keyword id="KW-0472">Membrane</keyword>
<keyword id="KW-0808">Transferase</keyword>
<keyword id="KW-0812">Transmembrane</keyword>
<keyword id="KW-1133">Transmembrane helix</keyword>
<proteinExistence type="inferred from homology"/>
<protein>
    <recommendedName>
        <fullName evidence="1">Undecaprenyl phosphate-alpha-4-amino-4-deoxy-L-arabinose arabinosyl transferase</fullName>
        <ecNumber evidence="1">2.4.2.43</ecNumber>
    </recommendedName>
    <alternativeName>
        <fullName evidence="1">4-amino-4-deoxy-L-arabinose lipid A transferase</fullName>
    </alternativeName>
    <alternativeName>
        <fullName evidence="1">Lipid IV(A) 4-amino-4-deoxy-L-arabinosyltransferase</fullName>
    </alternativeName>
    <alternativeName>
        <fullName evidence="1">Undecaprenyl phosphate-alpha-L-Ara4N transferase</fullName>
    </alternativeName>
</protein>